<feature type="chain" id="PRO_0000397613" description="rRNA biogenesis protein RRP36">
    <location>
        <begin position="1"/>
        <end position="288"/>
    </location>
</feature>
<feature type="region of interest" description="Disordered" evidence="3">
    <location>
        <begin position="1"/>
        <end position="150"/>
    </location>
</feature>
<feature type="coiled-coil region" evidence="2">
    <location>
        <begin position="184"/>
        <end position="219"/>
    </location>
</feature>
<feature type="compositionally biased region" description="Basic and acidic residues" evidence="3">
    <location>
        <begin position="23"/>
        <end position="33"/>
    </location>
</feature>
<feature type="compositionally biased region" description="Basic and acidic residues" evidence="3">
    <location>
        <begin position="50"/>
        <end position="85"/>
    </location>
</feature>
<feature type="compositionally biased region" description="Acidic residues" evidence="3">
    <location>
        <begin position="86"/>
        <end position="101"/>
    </location>
</feature>
<feature type="compositionally biased region" description="Basic and acidic residues" evidence="3">
    <location>
        <begin position="137"/>
        <end position="150"/>
    </location>
</feature>
<keyword id="KW-0175">Coiled coil</keyword>
<keyword id="KW-0539">Nucleus</keyword>
<keyword id="KW-1185">Reference proteome</keyword>
<keyword id="KW-0687">Ribonucleoprotein</keyword>
<keyword id="KW-0690">Ribosome biogenesis</keyword>
<keyword id="KW-0698">rRNA processing</keyword>
<proteinExistence type="inferred from homology"/>
<dbReference type="EMBL" id="AE016819">
    <property type="protein sequence ID" value="AAS53928.1"/>
    <property type="molecule type" value="Genomic_DNA"/>
</dbReference>
<dbReference type="RefSeq" id="NP_986104.1">
    <property type="nucleotide sequence ID" value="NM_212240.1"/>
</dbReference>
<dbReference type="SMR" id="Q752L7"/>
<dbReference type="FunCoup" id="Q752L7">
    <property type="interactions" value="602"/>
</dbReference>
<dbReference type="STRING" id="284811.Q752L7"/>
<dbReference type="EnsemblFungi" id="AAS53928">
    <property type="protein sequence ID" value="AAS53928"/>
    <property type="gene ID" value="AGOS_AFR557C"/>
</dbReference>
<dbReference type="GeneID" id="4622384"/>
<dbReference type="KEGG" id="ago:AGOS_AFR557C"/>
<dbReference type="eggNOG" id="KOG3190">
    <property type="taxonomic scope" value="Eukaryota"/>
</dbReference>
<dbReference type="HOGENOM" id="CLU_048802_3_0_1"/>
<dbReference type="InParanoid" id="Q752L7"/>
<dbReference type="OMA" id="HMKSKQR"/>
<dbReference type="OrthoDB" id="448446at2759"/>
<dbReference type="Proteomes" id="UP000000591">
    <property type="component" value="Chromosome VI"/>
</dbReference>
<dbReference type="GO" id="GO:0030686">
    <property type="term" value="C:90S preribosome"/>
    <property type="evidence" value="ECO:0000318"/>
    <property type="project" value="GO_Central"/>
</dbReference>
<dbReference type="GO" id="GO:0005730">
    <property type="term" value="C:nucleolus"/>
    <property type="evidence" value="ECO:0000318"/>
    <property type="project" value="GO_Central"/>
</dbReference>
<dbReference type="GO" id="GO:0032040">
    <property type="term" value="C:small-subunit processome"/>
    <property type="evidence" value="ECO:0007669"/>
    <property type="project" value="EnsemblFungi"/>
</dbReference>
<dbReference type="GO" id="GO:0000462">
    <property type="term" value="P:maturation of SSU-rRNA from tricistronic rRNA transcript (SSU-rRNA, 5.8S rRNA, LSU-rRNA)"/>
    <property type="evidence" value="ECO:0000318"/>
    <property type="project" value="GO_Central"/>
</dbReference>
<dbReference type="InterPro" id="IPR009292">
    <property type="entry name" value="RRP36"/>
</dbReference>
<dbReference type="PANTHER" id="PTHR21738">
    <property type="entry name" value="RIBOSOMAL RNA PROCESSING PROTEIN 36 HOMOLOG"/>
    <property type="match status" value="1"/>
</dbReference>
<dbReference type="PANTHER" id="PTHR21738:SF0">
    <property type="entry name" value="RIBOSOMAL RNA PROCESSING PROTEIN 36 HOMOLOG"/>
    <property type="match status" value="1"/>
</dbReference>
<dbReference type="Pfam" id="PF06102">
    <property type="entry name" value="RRP36"/>
    <property type="match status" value="1"/>
</dbReference>
<reference key="1">
    <citation type="journal article" date="2004" name="Science">
        <title>The Ashbya gossypii genome as a tool for mapping the ancient Saccharomyces cerevisiae genome.</title>
        <authorList>
            <person name="Dietrich F.S."/>
            <person name="Voegeli S."/>
            <person name="Brachat S."/>
            <person name="Lerch A."/>
            <person name="Gates K."/>
            <person name="Steiner S."/>
            <person name="Mohr C."/>
            <person name="Poehlmann R."/>
            <person name="Luedi P."/>
            <person name="Choi S."/>
            <person name="Wing R.A."/>
            <person name="Flavier A."/>
            <person name="Gaffney T.D."/>
            <person name="Philippsen P."/>
        </authorList>
    </citation>
    <scope>NUCLEOTIDE SEQUENCE [LARGE SCALE GENOMIC DNA]</scope>
    <source>
        <strain>ATCC 10895 / CBS 109.51 / FGSC 9923 / NRRL Y-1056</strain>
    </source>
</reference>
<reference key="2">
    <citation type="journal article" date="2013" name="G3 (Bethesda)">
        <title>Genomes of Ashbya fungi isolated from insects reveal four mating-type loci, numerous translocations, lack of transposons, and distinct gene duplications.</title>
        <authorList>
            <person name="Dietrich F.S."/>
            <person name="Voegeli S."/>
            <person name="Kuo S."/>
            <person name="Philippsen P."/>
        </authorList>
    </citation>
    <scope>GENOME REANNOTATION</scope>
    <source>
        <strain>ATCC 10895 / CBS 109.51 / FGSC 9923 / NRRL Y-1056</strain>
    </source>
</reference>
<organism>
    <name type="scientific">Eremothecium gossypii (strain ATCC 10895 / CBS 109.51 / FGSC 9923 / NRRL Y-1056)</name>
    <name type="common">Yeast</name>
    <name type="synonym">Ashbya gossypii</name>
    <dbReference type="NCBI Taxonomy" id="284811"/>
    <lineage>
        <taxon>Eukaryota</taxon>
        <taxon>Fungi</taxon>
        <taxon>Dikarya</taxon>
        <taxon>Ascomycota</taxon>
        <taxon>Saccharomycotina</taxon>
        <taxon>Saccharomycetes</taxon>
        <taxon>Saccharomycetales</taxon>
        <taxon>Saccharomycetaceae</taxon>
        <taxon>Eremothecium</taxon>
    </lineage>
</organism>
<accession>Q752L7</accession>
<protein>
    <recommendedName>
        <fullName>rRNA biogenesis protein RRP36</fullName>
    </recommendedName>
    <alternativeName>
        <fullName>Ribosomal RNA-processing protein 36</fullName>
    </alternativeName>
</protein>
<comment type="function">
    <text evidence="1">Component of the 90S pre-ribosome involved in the maturation of rRNAs. Required for early cleavages of the pre-RNAs in the 40S ribosomal subunit maturation pathway (By similarity).</text>
</comment>
<comment type="subunit">
    <text evidence="1">Associates with 90S and pre-40S pre-ribosomal particles.</text>
</comment>
<comment type="subcellular location">
    <subcellularLocation>
        <location evidence="1">Nucleus</location>
        <location evidence="1">Nucleolus</location>
    </subcellularLocation>
</comment>
<comment type="similarity">
    <text evidence="4">Belongs to the RRP36 family.</text>
</comment>
<name>RRP36_EREGS</name>
<sequence length="288" mass="33855">MSYYFKNLQPGVDESSSEDELEQMLHGKQRADDASSEDDELSSLTFGSLKKAEDALQREEAHEAVHNRARAEARPRGSARSRQEASDSEDSSDSEAGFFEEDDRRRASGARRHKHAPSEQSAKRPVSKVRQIPGLESARREEPQPDIRFDKSLGRAEDLAKVRSNYRFLDDYRQQEISELSALLADKKFLRKASEREVQQLQQRLTSMRSRLQTVQNRDTERQVLRDYERSINQGNKTKFHLKKSEQKKVVQKWKFDHMKARQRDKVMERKRKKLRGKEFRSFEFHRK</sequence>
<gene>
    <name type="primary">RRP36</name>
    <name type="ordered locus">AFR557C</name>
</gene>
<evidence type="ECO:0000250" key="1"/>
<evidence type="ECO:0000255" key="2"/>
<evidence type="ECO:0000256" key="3">
    <source>
        <dbReference type="SAM" id="MobiDB-lite"/>
    </source>
</evidence>
<evidence type="ECO:0000305" key="4"/>